<feature type="signal peptide" evidence="2">
    <location>
        <begin position="1" status="less than"/>
        <end position="17"/>
    </location>
</feature>
<feature type="propeptide" id="PRO_0000414634" evidence="1">
    <location>
        <begin position="18"/>
        <end position="41"/>
    </location>
</feature>
<feature type="peptide" id="PRO_0000414635" description="Conotoxin Eb6.9">
    <location>
        <begin position="42"/>
        <end position="69"/>
    </location>
</feature>
<feature type="disulfide bond" evidence="1">
    <location>
        <begin position="43"/>
        <end position="57"/>
    </location>
</feature>
<feature type="disulfide bond" evidence="1">
    <location>
        <begin position="50"/>
        <end position="61"/>
    </location>
</feature>
<feature type="disulfide bond" evidence="1">
    <location>
        <begin position="56"/>
        <end position="68"/>
    </location>
</feature>
<feature type="non-terminal residue">
    <location>
        <position position="1"/>
    </location>
</feature>
<reference key="1">
    <citation type="journal article" date="2009" name="PLoS ONE">
        <title>Geographic variation in venom allelic composition and diets of the widespread predatory marine gastropod Conus ebraeus.</title>
        <authorList>
            <person name="Duda T.F. Jr."/>
            <person name="Chang D."/>
            <person name="Lewis B.D."/>
            <person name="Lee T."/>
        </authorList>
    </citation>
    <scope>NUCLEOTIDE SEQUENCE [MRNA]</scope>
    <source>
        <strain>Hawaii</strain>
        <strain>Okinawa</strain>
        <tissue>Venom duct</tissue>
    </source>
</reference>
<reference key="2">
    <citation type="journal article" date="2000" name="Mol. Biol. Evol.">
        <title>Evolutionary diversification of multigene families: allelic selection of toxins in predatory cone snails.</title>
        <authorList>
            <person name="Duda T.F. Jr."/>
            <person name="Palumbi S.R."/>
        </authorList>
    </citation>
    <scope>NUCLEOTIDE SEQUENCE [MRNA]</scope>
</reference>
<proteinExistence type="evidence at transcript level"/>
<name>O169_CONEA</name>
<accession>Q9N669</accession>
<dbReference type="EMBL" id="AF174280">
    <property type="protein sequence ID" value="AAF89944.1"/>
    <property type="molecule type" value="mRNA"/>
</dbReference>
<dbReference type="EMBL" id="AF174281">
    <property type="protein sequence ID" value="AAF89945.1"/>
    <property type="molecule type" value="mRNA"/>
</dbReference>
<dbReference type="EMBL" id="FJ804533">
    <property type="protein sequence ID" value="ACU56808.1"/>
    <property type="molecule type" value="mRNA"/>
</dbReference>
<dbReference type="SMR" id="Q9N669"/>
<dbReference type="ConoServer" id="1254">
    <property type="toxin name" value="Eb6.9 precursor"/>
</dbReference>
<dbReference type="GO" id="GO:0005576">
    <property type="term" value="C:extracellular region"/>
    <property type="evidence" value="ECO:0007669"/>
    <property type="project" value="UniProtKB-SubCell"/>
</dbReference>
<dbReference type="GO" id="GO:0008200">
    <property type="term" value="F:ion channel inhibitor activity"/>
    <property type="evidence" value="ECO:0007669"/>
    <property type="project" value="InterPro"/>
</dbReference>
<dbReference type="GO" id="GO:0090729">
    <property type="term" value="F:toxin activity"/>
    <property type="evidence" value="ECO:0007669"/>
    <property type="project" value="UniProtKB-KW"/>
</dbReference>
<dbReference type="InterPro" id="IPR004214">
    <property type="entry name" value="Conotoxin"/>
</dbReference>
<dbReference type="Pfam" id="PF02950">
    <property type="entry name" value="Conotoxin"/>
    <property type="match status" value="1"/>
</dbReference>
<protein>
    <recommendedName>
        <fullName>Conotoxin Eb6.9</fullName>
    </recommendedName>
</protein>
<comment type="subcellular location">
    <subcellularLocation>
        <location evidence="1">Secreted</location>
    </subcellularLocation>
</comment>
<comment type="tissue specificity">
    <text>Expressed by the venom duct.</text>
</comment>
<comment type="domain">
    <text evidence="1">The presence of a 'disulfide through disulfide knot' structurally defines this protein as a knottin.</text>
</comment>
<comment type="domain">
    <text>The cysteine framework is VI/VII (C-C-CC-C-C).</text>
</comment>
<comment type="miscellaneous">
    <text evidence="4 5">This precursor corresponds to allele E1d (PubMed:19606224) or E1b (PubMed:10958845). Has not been merged with other alleles since they may differ due to geographic variation (see strains in PubMed:19606224).</text>
</comment>
<comment type="similarity">
    <text evidence="3">Belongs to the conotoxin O1 superfamily.</text>
</comment>
<gene>
    <name type="primary">E1</name>
</gene>
<keyword id="KW-1015">Disulfide bond</keyword>
<keyword id="KW-0960">Knottin</keyword>
<keyword id="KW-0964">Secreted</keyword>
<keyword id="KW-0732">Signal</keyword>
<keyword id="KW-0800">Toxin</keyword>
<evidence type="ECO:0000250" key="1"/>
<evidence type="ECO:0000255" key="2"/>
<evidence type="ECO:0000305" key="3"/>
<evidence type="ECO:0000305" key="4">
    <source>
    </source>
</evidence>
<evidence type="ECO:0000305" key="5">
    <source>
    </source>
</evidence>
<organism>
    <name type="scientific">Conus ebraeus</name>
    <name type="common">Hebrew cone</name>
    <dbReference type="NCBI Taxonomy" id="89425"/>
    <lineage>
        <taxon>Eukaryota</taxon>
        <taxon>Metazoa</taxon>
        <taxon>Spiralia</taxon>
        <taxon>Lophotrochozoa</taxon>
        <taxon>Mollusca</taxon>
        <taxon>Gastropoda</taxon>
        <taxon>Caenogastropoda</taxon>
        <taxon>Neogastropoda</taxon>
        <taxon>Conoidea</taxon>
        <taxon>Conidae</taxon>
        <taxon>Conus</taxon>
        <taxon>Virroconus</taxon>
    </lineage>
</organism>
<sequence length="69" mass="7662">VLIIAVLFLTACQLTTAETYSRGRQKHRARRSTDKNSKWTRECTRSGGACNSHTQCCDDFCSTATSTCI</sequence>